<comment type="function">
    <text evidence="1">Probable serine lipid hydrolase associated with lipid droplets. Has low cholesterol esterase activity. Appears to lack triglyceride lipase activity. Involved in cholesterol and triglyceride homeostasis; stimulates cellular triglyceride accumulation and cellular cholesterol release.</text>
</comment>
<comment type="catalytic activity">
    <reaction evidence="1">
        <text>a cholesterol ester + H2O = cholesterol + a fatty acid + H(+)</text>
        <dbReference type="Rhea" id="RHEA:36403"/>
        <dbReference type="ChEBI" id="CHEBI:15377"/>
        <dbReference type="ChEBI" id="CHEBI:15378"/>
        <dbReference type="ChEBI" id="CHEBI:16113"/>
        <dbReference type="ChEBI" id="CHEBI:17002"/>
        <dbReference type="ChEBI" id="CHEBI:28868"/>
        <dbReference type="EC" id="3.1.1.13"/>
    </reaction>
    <physiologicalReaction direction="left-to-right" evidence="1">
        <dbReference type="Rhea" id="RHEA:36404"/>
    </physiologicalReaction>
</comment>
<comment type="subcellular location">
    <subcellularLocation>
        <location evidence="1">Lipid droplet</location>
    </subcellularLocation>
    <subcellularLocation>
        <location evidence="1">Endoplasmic reticulum</location>
    </subcellularLocation>
    <text evidence="1">Localizes to the endoplasmic reticulum in absence of lipid droplets and translocates to lipid droplets upon lipid storage induction.</text>
</comment>
<comment type="similarity">
    <text evidence="4">Belongs to the AB hydrolase superfamily. LDAH family.</text>
</comment>
<comment type="caution">
    <text evidence="1">The catalytic activity is unsure despite catalytic sites being conserved (By similarity). May have low cholesterol esterase activity but lack triglyceride lipase activity (By similarity).</text>
</comment>
<comment type="sequence caution" evidence="4">
    <conflict type="erroneous initiation">
        <sequence resource="EMBL-CDS" id="CAH65057"/>
    </conflict>
</comment>
<proteinExistence type="evidence at transcript level"/>
<reference key="1">
    <citation type="journal article" date="2005" name="Genome Biol.">
        <title>Full-length cDNAs from chicken bursal lymphocytes to facilitate gene function analysis.</title>
        <authorList>
            <person name="Caldwell R.B."/>
            <person name="Kierzek A.M."/>
            <person name="Arakawa H."/>
            <person name="Bezzubov Y."/>
            <person name="Zaim J."/>
            <person name="Fiedler P."/>
            <person name="Kutter S."/>
            <person name="Blagodatski A."/>
            <person name="Kostovska D."/>
            <person name="Koter M."/>
            <person name="Plachy J."/>
            <person name="Carninci P."/>
            <person name="Hayashizaki Y."/>
            <person name="Buerstedde J.-M."/>
        </authorList>
    </citation>
    <scope>NUCLEOTIDE SEQUENCE [LARGE SCALE MRNA]</scope>
    <source>
        <strain>CB</strain>
        <tissue>Bursa of Fabricius</tissue>
    </source>
</reference>
<sequence>MRSVSEEPVPLHEEFIYCCGAATHVLKCGPWKDLSKDESKNLPRLLFMIIPGNPGLAGYYRTFIKALYCGLNQQYPVWVVSHAGHCKPPSGMEMIEDTDIKELEDVFGLNGQVEHKLNFLKKNVSKDIKLVLIAHSIGCYITLEMMKRASELQVLRSVLLFPTIERMAQSPQGKLMTPLLCKLRYALYMPVYLLSFLPEGVKASLVRFALRGMKTCDESSITTSVNLFSVDCIANILYMASQEMMKVVERDSTTIKQNLKKLIFYYGTGDSWCPQNYYDEIKMDFPDGDIRLCEKGLRHAFVLDASKEMAAMITDWLRDDLTKL</sequence>
<evidence type="ECO:0000250" key="1">
    <source>
        <dbReference type="UniProtKB" id="Q8BVA5"/>
    </source>
</evidence>
<evidence type="ECO:0000250" key="2">
    <source>
        <dbReference type="UniProtKB" id="Q9H6V9"/>
    </source>
</evidence>
<evidence type="ECO:0000255" key="3">
    <source>
        <dbReference type="PROSITE-ProRule" id="PRU10037"/>
    </source>
</evidence>
<evidence type="ECO:0000305" key="4"/>
<name>LDAH_CHICK</name>
<keyword id="KW-0256">Endoplasmic reticulum</keyword>
<keyword id="KW-0378">Hydrolase</keyword>
<keyword id="KW-0551">Lipid droplet</keyword>
<keyword id="KW-1185">Reference proteome</keyword>
<dbReference type="EC" id="3.1.1.13" evidence="1"/>
<dbReference type="EMBL" id="AJ851423">
    <property type="protein sequence ID" value="CAH65057.1"/>
    <property type="status" value="ALT_INIT"/>
    <property type="molecule type" value="mRNA"/>
</dbReference>
<dbReference type="RefSeq" id="NP_001026264.1">
    <property type="nucleotide sequence ID" value="NM_001031093.1"/>
</dbReference>
<dbReference type="RefSeq" id="XP_046770167.1">
    <property type="nucleotide sequence ID" value="XM_046914211.1"/>
</dbReference>
<dbReference type="RefSeq" id="XP_046770168.1">
    <property type="nucleotide sequence ID" value="XM_046914212.1"/>
</dbReference>
<dbReference type="RefSeq" id="XP_046770169.1">
    <property type="nucleotide sequence ID" value="XM_046914213.1"/>
</dbReference>
<dbReference type="FunCoup" id="Q5F477">
    <property type="interactions" value="1272"/>
</dbReference>
<dbReference type="STRING" id="9031.ENSGALP00000072104"/>
<dbReference type="ESTHER" id="chick-cb043">
    <property type="family name" value="LIDHydrolase"/>
</dbReference>
<dbReference type="PaxDb" id="9031-ENSGALP00000030947"/>
<dbReference type="GeneID" id="421967"/>
<dbReference type="KEGG" id="gga:421967"/>
<dbReference type="CTD" id="60526"/>
<dbReference type="VEuPathDB" id="HostDB:geneid_421967"/>
<dbReference type="eggNOG" id="KOG3975">
    <property type="taxonomic scope" value="Eukaryota"/>
</dbReference>
<dbReference type="InParanoid" id="Q5F477"/>
<dbReference type="OrthoDB" id="448051at2759"/>
<dbReference type="PhylomeDB" id="Q5F477"/>
<dbReference type="PRO" id="PR:Q5F477"/>
<dbReference type="Proteomes" id="UP000000539">
    <property type="component" value="Unassembled WGS sequence"/>
</dbReference>
<dbReference type="GO" id="GO:0005783">
    <property type="term" value="C:endoplasmic reticulum"/>
    <property type="evidence" value="ECO:0000250"/>
    <property type="project" value="UniProtKB"/>
</dbReference>
<dbReference type="GO" id="GO:0005811">
    <property type="term" value="C:lipid droplet"/>
    <property type="evidence" value="ECO:0000250"/>
    <property type="project" value="UniProtKB"/>
</dbReference>
<dbReference type="GO" id="GO:0004771">
    <property type="term" value="F:sterol ester esterase activity"/>
    <property type="evidence" value="ECO:0000250"/>
    <property type="project" value="UniProtKB"/>
</dbReference>
<dbReference type="GO" id="GO:0042632">
    <property type="term" value="P:cholesterol homeostasis"/>
    <property type="evidence" value="ECO:0000250"/>
    <property type="project" value="UniProtKB"/>
</dbReference>
<dbReference type="GO" id="GO:0035356">
    <property type="term" value="P:intracellular triglyceride homeostasis"/>
    <property type="evidence" value="ECO:0000250"/>
    <property type="project" value="UniProtKB"/>
</dbReference>
<dbReference type="GO" id="GO:0160077">
    <property type="term" value="P:lipid droplet fusion"/>
    <property type="evidence" value="ECO:0000250"/>
    <property type="project" value="UniProtKB"/>
</dbReference>
<dbReference type="GO" id="GO:0019915">
    <property type="term" value="P:lipid storage"/>
    <property type="evidence" value="ECO:0000318"/>
    <property type="project" value="GO_Central"/>
</dbReference>
<dbReference type="FunFam" id="3.40.50.1820:FF:000068">
    <property type="entry name" value="Lipid droplet associated hydrolase"/>
    <property type="match status" value="1"/>
</dbReference>
<dbReference type="Gene3D" id="3.40.50.1820">
    <property type="entry name" value="alpha/beta hydrolase"/>
    <property type="match status" value="1"/>
</dbReference>
<dbReference type="InterPro" id="IPR029058">
    <property type="entry name" value="AB_hydrolase_fold"/>
</dbReference>
<dbReference type="InterPro" id="IPR019363">
    <property type="entry name" value="LDAH"/>
</dbReference>
<dbReference type="PANTHER" id="PTHR13390">
    <property type="entry name" value="LIPASE"/>
    <property type="match status" value="1"/>
</dbReference>
<dbReference type="PANTHER" id="PTHR13390:SF0">
    <property type="entry name" value="LIPID DROPLET-ASSOCIATED HYDROLASE"/>
    <property type="match status" value="1"/>
</dbReference>
<dbReference type="Pfam" id="PF10230">
    <property type="entry name" value="LIDHydrolase"/>
    <property type="match status" value="1"/>
</dbReference>
<dbReference type="SUPFAM" id="SSF53474">
    <property type="entry name" value="alpha/beta-Hydrolases"/>
    <property type="match status" value="1"/>
</dbReference>
<gene>
    <name evidence="1" type="primary">LDAH</name>
    <name type="ORF">RCJMB04_2g19</name>
</gene>
<feature type="chain" id="PRO_0000300128" description="Lipid droplet-associated hydrolase">
    <location>
        <begin position="1"/>
        <end position="324"/>
    </location>
</feature>
<feature type="active site" description="Nucleophile" evidence="3">
    <location>
        <position position="136"/>
    </location>
</feature>
<feature type="active site" description="Charge relay system" evidence="2">
    <location>
        <position position="270"/>
    </location>
</feature>
<feature type="active site" description="Charge relay system" evidence="2">
    <location>
        <position position="299"/>
    </location>
</feature>
<accession>Q5F477</accession>
<organism>
    <name type="scientific">Gallus gallus</name>
    <name type="common">Chicken</name>
    <dbReference type="NCBI Taxonomy" id="9031"/>
    <lineage>
        <taxon>Eukaryota</taxon>
        <taxon>Metazoa</taxon>
        <taxon>Chordata</taxon>
        <taxon>Craniata</taxon>
        <taxon>Vertebrata</taxon>
        <taxon>Euteleostomi</taxon>
        <taxon>Archelosauria</taxon>
        <taxon>Archosauria</taxon>
        <taxon>Dinosauria</taxon>
        <taxon>Saurischia</taxon>
        <taxon>Theropoda</taxon>
        <taxon>Coelurosauria</taxon>
        <taxon>Aves</taxon>
        <taxon>Neognathae</taxon>
        <taxon>Galloanserae</taxon>
        <taxon>Galliformes</taxon>
        <taxon>Phasianidae</taxon>
        <taxon>Phasianinae</taxon>
        <taxon>Gallus</taxon>
    </lineage>
</organism>
<protein>
    <recommendedName>
        <fullName evidence="1">Lipid droplet-associated hydrolase</fullName>
        <ecNumber evidence="1">3.1.1.13</ecNumber>
    </recommendedName>
    <alternativeName>
        <fullName evidence="1">Lipid droplet-associated serine hydrolase</fullName>
    </alternativeName>
</protein>